<evidence type="ECO:0000255" key="1">
    <source>
        <dbReference type="HAMAP-Rule" id="MF_02210"/>
    </source>
</evidence>
<evidence type="ECO:0000269" key="2">
    <source>
    </source>
</evidence>
<evidence type="ECO:0000269" key="3">
    <source>
    </source>
</evidence>
<evidence type="ECO:0000269" key="4">
    <source>
    </source>
</evidence>
<evidence type="ECO:0000303" key="5">
    <source>
    </source>
</evidence>
<evidence type="ECO:0000303" key="6">
    <source>
    </source>
</evidence>
<evidence type="ECO:0000305" key="7"/>
<dbReference type="EC" id="2.3.1.266" evidence="1 2"/>
<dbReference type="EC" id="2.3.1.-" evidence="3"/>
<dbReference type="EMBL" id="X06117">
    <property type="protein sequence ID" value="CAA29489.1"/>
    <property type="molecule type" value="Genomic_DNA"/>
</dbReference>
<dbReference type="EMBL" id="U14003">
    <property type="protein sequence ID" value="AAA97269.1"/>
    <property type="molecule type" value="Genomic_DNA"/>
</dbReference>
<dbReference type="EMBL" id="U00096">
    <property type="protein sequence ID" value="AAC77326.1"/>
    <property type="molecule type" value="Genomic_DNA"/>
</dbReference>
<dbReference type="EMBL" id="AP009048">
    <property type="protein sequence ID" value="BAE78361.1"/>
    <property type="molecule type" value="Genomic_DNA"/>
</dbReference>
<dbReference type="EMBL" id="L05387">
    <property type="protein sequence ID" value="AAA03077.1"/>
    <property type="molecule type" value="Unassigned_DNA"/>
</dbReference>
<dbReference type="PIR" id="D65252">
    <property type="entry name" value="D65252"/>
</dbReference>
<dbReference type="RefSeq" id="NP_418790.1">
    <property type="nucleotide sequence ID" value="NC_000913.3"/>
</dbReference>
<dbReference type="RefSeq" id="WP_001092461.1">
    <property type="nucleotide sequence ID" value="NZ_SSZK01000015.1"/>
</dbReference>
<dbReference type="SMR" id="P0A944"/>
<dbReference type="BioGRID" id="4262786">
    <property type="interactions" value="25"/>
</dbReference>
<dbReference type="BioGRID" id="853171">
    <property type="interactions" value="1"/>
</dbReference>
<dbReference type="DIP" id="DIP-48259N"/>
<dbReference type="FunCoup" id="P0A944">
    <property type="interactions" value="323"/>
</dbReference>
<dbReference type="IntAct" id="P0A944">
    <property type="interactions" value="1"/>
</dbReference>
<dbReference type="STRING" id="511145.b4373"/>
<dbReference type="jPOST" id="P0A944"/>
<dbReference type="PaxDb" id="511145-b4373"/>
<dbReference type="EnsemblBacteria" id="AAC77326">
    <property type="protein sequence ID" value="AAC77326"/>
    <property type="gene ID" value="b4373"/>
</dbReference>
<dbReference type="GeneID" id="75202945"/>
<dbReference type="GeneID" id="948894"/>
<dbReference type="KEGG" id="ecj:JW4335"/>
<dbReference type="KEGG" id="eco:b4373"/>
<dbReference type="KEGG" id="ecoc:C3026_23625"/>
<dbReference type="PATRIC" id="fig|1411691.4.peg.2315"/>
<dbReference type="EchoBASE" id="EB0843"/>
<dbReference type="eggNOG" id="COG0456">
    <property type="taxonomic scope" value="Bacteria"/>
</dbReference>
<dbReference type="HOGENOM" id="CLU_013985_23_2_6"/>
<dbReference type="InParanoid" id="P0A944"/>
<dbReference type="OMA" id="GERYLNY"/>
<dbReference type="OrthoDB" id="9796919at2"/>
<dbReference type="PhylomeDB" id="P0A944"/>
<dbReference type="BioCyc" id="EcoCyc:EG10850-MONOMER"/>
<dbReference type="BioCyc" id="MetaCyc:EG10850-MONOMER"/>
<dbReference type="PRO" id="PR:P0A944"/>
<dbReference type="Proteomes" id="UP000000625">
    <property type="component" value="Chromosome"/>
</dbReference>
<dbReference type="GO" id="GO:0005737">
    <property type="term" value="C:cytoplasm"/>
    <property type="evidence" value="ECO:0007669"/>
    <property type="project" value="UniProtKB-SubCell"/>
</dbReference>
<dbReference type="GO" id="GO:0008080">
    <property type="term" value="F:N-acetyltransferase activity"/>
    <property type="evidence" value="ECO:0000315"/>
    <property type="project" value="EcoliWiki"/>
</dbReference>
<dbReference type="GO" id="GO:0061733">
    <property type="term" value="F:protein-lysine-acetyltransferase activity"/>
    <property type="evidence" value="ECO:0000314"/>
    <property type="project" value="EcoCyc"/>
</dbReference>
<dbReference type="GO" id="GO:0008999">
    <property type="term" value="F:protein-N-terminal-alanine acetyltransferase activity"/>
    <property type="evidence" value="ECO:0000315"/>
    <property type="project" value="EcoliWiki"/>
</dbReference>
<dbReference type="GO" id="GO:0036211">
    <property type="term" value="P:protein modification process"/>
    <property type="evidence" value="ECO:0000315"/>
    <property type="project" value="EcoliWiki"/>
</dbReference>
<dbReference type="CDD" id="cd04301">
    <property type="entry name" value="NAT_SF"/>
    <property type="match status" value="1"/>
</dbReference>
<dbReference type="FunFam" id="3.40.630.30:FF:000018">
    <property type="entry name" value="[Ribosomal protein S18]-alanine N-acetyltransferase"/>
    <property type="match status" value="1"/>
</dbReference>
<dbReference type="Gene3D" id="3.40.630.30">
    <property type="match status" value="1"/>
</dbReference>
<dbReference type="HAMAP" id="MF_02210">
    <property type="entry name" value="RimI"/>
    <property type="match status" value="1"/>
</dbReference>
<dbReference type="InterPro" id="IPR006464">
    <property type="entry name" value="AcTrfase_RimI/Ard1"/>
</dbReference>
<dbReference type="InterPro" id="IPR016181">
    <property type="entry name" value="Acyl_CoA_acyltransferase"/>
</dbReference>
<dbReference type="InterPro" id="IPR000182">
    <property type="entry name" value="GNAT_dom"/>
</dbReference>
<dbReference type="InterPro" id="IPR043690">
    <property type="entry name" value="RimI"/>
</dbReference>
<dbReference type="InterPro" id="IPR050680">
    <property type="entry name" value="YpeA/RimI_acetyltransf"/>
</dbReference>
<dbReference type="NCBIfam" id="NF007025">
    <property type="entry name" value="PRK09491.1"/>
    <property type="match status" value="1"/>
</dbReference>
<dbReference type="NCBIfam" id="TIGR01575">
    <property type="entry name" value="rimI"/>
    <property type="match status" value="1"/>
</dbReference>
<dbReference type="PANTHER" id="PTHR43420">
    <property type="entry name" value="ACETYLTRANSFERASE"/>
    <property type="match status" value="1"/>
</dbReference>
<dbReference type="PANTHER" id="PTHR43420:SF51">
    <property type="entry name" value="PEPTIDYL-LYSINE N-ACETYLTRANSFERASE YIAC"/>
    <property type="match status" value="1"/>
</dbReference>
<dbReference type="Pfam" id="PF00583">
    <property type="entry name" value="Acetyltransf_1"/>
    <property type="match status" value="1"/>
</dbReference>
<dbReference type="SUPFAM" id="SSF55729">
    <property type="entry name" value="Acyl-CoA N-acyltransferases (Nat)"/>
    <property type="match status" value="1"/>
</dbReference>
<dbReference type="PROSITE" id="PS51186">
    <property type="entry name" value="GNAT"/>
    <property type="match status" value="1"/>
</dbReference>
<proteinExistence type="evidence at protein level"/>
<sequence length="148" mass="16610">MNTISSLETTDLPAAYHIEQRAHAFPWSEKTFASNQGERYLNFQLTQNGKMAAFAITQVVLDEATLFNIAVDPDYQRQGLGRALLEHLIDELEKRGVATLWLEVRASNAAAIALYESLGFNEATIRRNYYPTTDGREDAIIMALPISM</sequence>
<organism>
    <name type="scientific">Escherichia coli (strain K12)</name>
    <dbReference type="NCBI Taxonomy" id="83333"/>
    <lineage>
        <taxon>Bacteria</taxon>
        <taxon>Pseudomonadati</taxon>
        <taxon>Pseudomonadota</taxon>
        <taxon>Gammaproteobacteria</taxon>
        <taxon>Enterobacterales</taxon>
        <taxon>Enterobacteriaceae</taxon>
        <taxon>Escherichia</taxon>
    </lineage>
</organism>
<name>RIMI_ECOLI</name>
<protein>
    <recommendedName>
        <fullName evidence="1 7">[Ribosomal protein bS18]-alanine N-acetyltransferase</fullName>
        <ecNumber evidence="1 2">2.3.1.266</ecNumber>
    </recommendedName>
    <alternativeName>
        <fullName evidence="5">KAT</fullName>
    </alternativeName>
    <alternativeName>
        <fullName evidence="7">Peptidyl-lysine N-acetyltransferase</fullName>
        <ecNumber evidence="3">2.3.1.-</ecNumber>
    </alternativeName>
</protein>
<gene>
    <name evidence="1 6" type="primary">rimI</name>
    <name type="ordered locus">b4373</name>
    <name type="ordered locus">JW4335</name>
</gene>
<feature type="chain" id="PRO_0000074561" description="[Ribosomal protein bS18]-alanine N-acetyltransferase">
    <location>
        <begin position="1"/>
        <end position="148"/>
    </location>
</feature>
<feature type="domain" description="N-acetyltransferase" evidence="1">
    <location>
        <begin position="2"/>
        <end position="147"/>
    </location>
</feature>
<feature type="active site" description="Proton acceptor" evidence="1">
    <location>
        <position position="103"/>
    </location>
</feature>
<feature type="active site" description="Proton donor" evidence="1">
    <location>
        <position position="115"/>
    </location>
</feature>
<feature type="binding site" evidence="1">
    <location>
        <begin position="69"/>
        <end position="71"/>
    </location>
    <ligand>
        <name>acetyl-CoA</name>
        <dbReference type="ChEBI" id="CHEBI:57288"/>
    </ligand>
</feature>
<feature type="binding site" evidence="1">
    <location>
        <position position="108"/>
    </location>
    <ligand>
        <name>acetyl-CoA</name>
        <dbReference type="ChEBI" id="CHEBI:57288"/>
    </ligand>
</feature>
<feature type="mutagenesis site" description="Loss of activity." evidence="3">
    <original>Y</original>
    <variation>A</variation>
    <location>
        <position position="115"/>
    </location>
</feature>
<feature type="sequence conflict" description="In Ref. 1; CAA29489 and 2; AAA97269." evidence="7" ref="1 2">
    <original>ALPISM</original>
    <variation>RCQSVCNTRWNNEVGLDFL</variation>
    <location>
        <begin position="143"/>
        <end position="148"/>
    </location>
</feature>
<accession>P0A944</accession>
<accession>P09453</accession>
<accession>Q2M5U5</accession>
<comment type="function">
    <text evidence="2 3 4">Acetylates the N-terminal alanine of ribosomal protein bS18 (PubMed:2828880, PubMed:6991870). Also acts as a N-epsilon-lysine acetyltransferase that catalyzes acetylation of several proteins (PubMed:30352934).</text>
</comment>
<comment type="catalytic activity">
    <reaction evidence="1 2">
        <text>N-terminal L-alanyl-[ribosomal protein bS18] + acetyl-CoA = N-terminal N(alpha)-acetyl-L-alanyl-[ribosomal protein bS18] + CoA + H(+)</text>
        <dbReference type="Rhea" id="RHEA:43756"/>
        <dbReference type="Rhea" id="RHEA-COMP:10676"/>
        <dbReference type="Rhea" id="RHEA-COMP:10677"/>
        <dbReference type="ChEBI" id="CHEBI:15378"/>
        <dbReference type="ChEBI" id="CHEBI:57287"/>
        <dbReference type="ChEBI" id="CHEBI:57288"/>
        <dbReference type="ChEBI" id="CHEBI:64718"/>
        <dbReference type="ChEBI" id="CHEBI:83683"/>
        <dbReference type="EC" id="2.3.1.266"/>
    </reaction>
</comment>
<comment type="catalytic activity">
    <reaction evidence="3">
        <text>L-lysyl-[protein] + acetyl-CoA = N(6)-acetyl-L-lysyl-[protein] + CoA + H(+)</text>
        <dbReference type="Rhea" id="RHEA:45948"/>
        <dbReference type="Rhea" id="RHEA-COMP:9752"/>
        <dbReference type="Rhea" id="RHEA-COMP:10731"/>
        <dbReference type="ChEBI" id="CHEBI:15378"/>
        <dbReference type="ChEBI" id="CHEBI:29969"/>
        <dbReference type="ChEBI" id="CHEBI:57287"/>
        <dbReference type="ChEBI" id="CHEBI:57288"/>
        <dbReference type="ChEBI" id="CHEBI:61930"/>
    </reaction>
</comment>
<comment type="subcellular location">
    <subcellularLocation>
        <location evidence="1 7">Cytoplasm</location>
    </subcellularLocation>
</comment>
<comment type="disruption phenotype">
    <text evidence="4">Mutation of the gene impairs the acetylation of the N-terminal alanine of ribosomal protein bS18, but does not affect acetylation of ribosomal proteins uS5 or bL12.</text>
</comment>
<comment type="similarity">
    <text evidence="1 7">Belongs to the acetyltransferase family. RimI subfamily.</text>
</comment>
<keyword id="KW-0012">Acyltransferase</keyword>
<keyword id="KW-0963">Cytoplasm</keyword>
<keyword id="KW-1185">Reference proteome</keyword>
<keyword id="KW-0808">Transferase</keyword>
<reference key="1">
    <citation type="journal article" date="1987" name="Mol. Gen. Genet.">
        <title>Cloning and nucleotide sequencing of the genes rimI and rimJ which encode enzymes acetylating ribosomal proteins S18 and S5 of Escherichia coli K12.</title>
        <authorList>
            <person name="Yoshikawa A."/>
            <person name="Isono S."/>
            <person name="Sheback A."/>
            <person name="Isono K."/>
        </authorList>
    </citation>
    <scope>NUCLEOTIDE SEQUENCE [GENOMIC DNA]</scope>
    <scope>FUNCTION</scope>
    <scope>CATALYTIC ACTIVITY</scope>
    <source>
        <strain>K12</strain>
    </source>
</reference>
<reference key="2">
    <citation type="journal article" date="1995" name="Nucleic Acids Res.">
        <title>Analysis of the Escherichia coli genome VI: DNA sequence of the region from 92.8 through 100 minutes.</title>
        <authorList>
            <person name="Burland V.D."/>
            <person name="Plunkett G. III"/>
            <person name="Sofia H.J."/>
            <person name="Daniels D.L."/>
            <person name="Blattner F.R."/>
        </authorList>
    </citation>
    <scope>NUCLEOTIDE SEQUENCE [LARGE SCALE GENOMIC DNA]</scope>
    <source>
        <strain>K12 / MG1655 / ATCC 47076</strain>
    </source>
</reference>
<reference key="3">
    <citation type="journal article" date="1997" name="Science">
        <title>The complete genome sequence of Escherichia coli K-12.</title>
        <authorList>
            <person name="Blattner F.R."/>
            <person name="Plunkett G. III"/>
            <person name="Bloch C.A."/>
            <person name="Perna N.T."/>
            <person name="Burland V."/>
            <person name="Riley M."/>
            <person name="Collado-Vides J."/>
            <person name="Glasner J.D."/>
            <person name="Rode C.K."/>
            <person name="Mayhew G.F."/>
            <person name="Gregor J."/>
            <person name="Davis N.W."/>
            <person name="Kirkpatrick H.A."/>
            <person name="Goeden M.A."/>
            <person name="Rose D.J."/>
            <person name="Mau B."/>
            <person name="Shao Y."/>
        </authorList>
    </citation>
    <scope>NUCLEOTIDE SEQUENCE [LARGE SCALE GENOMIC DNA]</scope>
    <scope>SEQUENCE REVISION TO C-TERMINUS</scope>
    <source>
        <strain>K12 / MG1655 / ATCC 47076</strain>
    </source>
</reference>
<reference key="4">
    <citation type="journal article" date="2006" name="Mol. Syst. Biol.">
        <title>Highly accurate genome sequences of Escherichia coli K-12 strains MG1655 and W3110.</title>
        <authorList>
            <person name="Hayashi K."/>
            <person name="Morooka N."/>
            <person name="Yamamoto Y."/>
            <person name="Fujita K."/>
            <person name="Isono K."/>
            <person name="Choi S."/>
            <person name="Ohtsubo E."/>
            <person name="Baba T."/>
            <person name="Wanner B.L."/>
            <person name="Mori H."/>
            <person name="Horiuchi T."/>
        </authorList>
    </citation>
    <scope>NUCLEOTIDE SEQUENCE [LARGE SCALE GENOMIC DNA]</scope>
    <source>
        <strain>K12 / W3110 / ATCC 27325 / DSM 5911</strain>
    </source>
</reference>
<reference key="5">
    <citation type="journal article" date="1993" name="J. Bacteriol.">
        <title>Identification, isolation, and overexpression of the gene encoding the psi subunit of DNA polymerase III holoenzyme.</title>
        <authorList>
            <person name="Carter J.R."/>
            <person name="Franden M.A."/>
            <person name="Aebersold R.H."/>
            <person name="McHenry C.S."/>
        </authorList>
    </citation>
    <scope>NUCLEOTIDE SEQUENCE [GENOMIC DNA] OF 1-30</scope>
    <source>
        <strain>K12 / MG1655 / ATCC 47076</strain>
    </source>
</reference>
<reference key="6">
    <citation type="journal article" date="1980" name="Mol. Gen. Genet.">
        <title>Ribosomal protein modification in Escherichia coli. II. Studies of a mutant lacking the N-terminal acetylation of protein S18.</title>
        <authorList>
            <person name="Isono K."/>
            <person name="Isono S."/>
        </authorList>
    </citation>
    <scope>FUNCTION</scope>
    <scope>DISRUPTION PHENOTYPE</scope>
</reference>
<reference key="7">
    <citation type="journal article" date="2018" name="MBio">
        <title>Identification of novel protein lysine acetyltransferases in Escherichia coli.</title>
        <authorList>
            <person name="Christensen D.G."/>
            <person name="Meyer J.G."/>
            <person name="Baumgartner J.T."/>
            <person name="D'Souza A.K."/>
            <person name="Nelson W.C."/>
            <person name="Payne S.H."/>
            <person name="Kuhn M.L."/>
            <person name="Schilling B."/>
            <person name="Wolfe A.J."/>
        </authorList>
    </citation>
    <scope>FUNCTION AS A LYSINE ACETYLTRANSFERASE</scope>
    <scope>CATALYTIC ACTIVITY</scope>
    <scope>MUTAGENESIS OF TYR-115</scope>
    <source>
        <strain>K12</strain>
    </source>
</reference>
<reference key="8">
    <citation type="journal article" date="2019" name="MBio">
        <title>Correction for Christensen et al., 'Identification of novel protein lysine acetyltransferases in Escherichia coli'.</title>
        <authorList>
            <person name="Christensen D.G."/>
            <person name="Meyer J.G."/>
            <person name="Baumgartner J.T."/>
            <person name="D'Souza A.K."/>
            <person name="Nelson W.C."/>
            <person name="Payne S.H."/>
            <person name="Kuhn M.L."/>
            <person name="Schilling B."/>
            <person name="Wolfe A.J."/>
        </authorList>
    </citation>
    <scope>ERRATUM OF PUBMED:30352934</scope>
</reference>